<organism>
    <name type="scientific">Salvadora persica</name>
    <name type="common">Toothbrush tree</name>
    <dbReference type="NCBI Taxonomy" id="4326"/>
    <lineage>
        <taxon>Eukaryota</taxon>
        <taxon>Viridiplantae</taxon>
        <taxon>Streptophyta</taxon>
        <taxon>Embryophyta</taxon>
        <taxon>Tracheophyta</taxon>
        <taxon>Spermatophyta</taxon>
        <taxon>Magnoliopsida</taxon>
        <taxon>eudicotyledons</taxon>
        <taxon>Gunneridae</taxon>
        <taxon>Pentapetalae</taxon>
        <taxon>rosids</taxon>
        <taxon>malvids</taxon>
        <taxon>Brassicales</taxon>
        <taxon>Salvadoraceae</taxon>
        <taxon>Salvadora</taxon>
    </lineage>
</organism>
<accession>P31201</accession>
<protein>
    <recommendedName>
        <fullName evidence="1">Ribulose bisphosphate carboxylase large chain</fullName>
        <shortName evidence="1">RuBisCO large subunit</shortName>
        <ecNumber evidence="1">4.1.1.39</ecNumber>
    </recommendedName>
</protein>
<name>RBL_SALPE</name>
<geneLocation type="chloroplast"/>
<feature type="propeptide" id="PRO_0000031395" evidence="1">
    <location>
        <begin position="1"/>
        <end position="2"/>
    </location>
</feature>
<feature type="chain" id="PRO_0000031396" description="Ribulose bisphosphate carboxylase large chain">
    <location>
        <begin position="3"/>
        <end position="452" status="greater than"/>
    </location>
</feature>
<feature type="active site" description="Proton acceptor" evidence="1">
    <location>
        <position position="175"/>
    </location>
</feature>
<feature type="active site" description="Proton acceptor" evidence="1">
    <location>
        <position position="294"/>
    </location>
</feature>
<feature type="binding site" description="in homodimeric partner" evidence="1">
    <location>
        <position position="123"/>
    </location>
    <ligand>
        <name>substrate</name>
    </ligand>
</feature>
<feature type="binding site" evidence="1">
    <location>
        <position position="173"/>
    </location>
    <ligand>
        <name>substrate</name>
    </ligand>
</feature>
<feature type="binding site" evidence="1">
    <location>
        <position position="177"/>
    </location>
    <ligand>
        <name>substrate</name>
    </ligand>
</feature>
<feature type="binding site" description="via carbamate group" evidence="1">
    <location>
        <position position="201"/>
    </location>
    <ligand>
        <name>Mg(2+)</name>
        <dbReference type="ChEBI" id="CHEBI:18420"/>
    </ligand>
</feature>
<feature type="binding site" evidence="1">
    <location>
        <position position="203"/>
    </location>
    <ligand>
        <name>Mg(2+)</name>
        <dbReference type="ChEBI" id="CHEBI:18420"/>
    </ligand>
</feature>
<feature type="binding site" evidence="1">
    <location>
        <position position="204"/>
    </location>
    <ligand>
        <name>Mg(2+)</name>
        <dbReference type="ChEBI" id="CHEBI:18420"/>
    </ligand>
</feature>
<feature type="binding site" evidence="1">
    <location>
        <position position="295"/>
    </location>
    <ligand>
        <name>substrate</name>
    </ligand>
</feature>
<feature type="binding site" evidence="1">
    <location>
        <position position="327"/>
    </location>
    <ligand>
        <name>substrate</name>
    </ligand>
</feature>
<feature type="binding site" evidence="1">
    <location>
        <position position="379"/>
    </location>
    <ligand>
        <name>substrate</name>
    </ligand>
</feature>
<feature type="site" description="Transition state stabilizer" evidence="1">
    <location>
        <position position="334"/>
    </location>
</feature>
<feature type="modified residue" description="N-acetylproline" evidence="1">
    <location>
        <position position="3"/>
    </location>
</feature>
<feature type="modified residue" description="N6,N6,N6-trimethyllysine" evidence="1">
    <location>
        <position position="14"/>
    </location>
</feature>
<feature type="modified residue" description="N6-carboxylysine" evidence="1">
    <location>
        <position position="201"/>
    </location>
</feature>
<feature type="disulfide bond" description="Interchain; in linked form" evidence="1">
    <location>
        <position position="247"/>
    </location>
</feature>
<feature type="non-terminal residue">
    <location>
        <position position="452"/>
    </location>
</feature>
<gene>
    <name evidence="1" type="primary">rbcL</name>
</gene>
<proteinExistence type="inferred from homology"/>
<keyword id="KW-0007">Acetylation</keyword>
<keyword id="KW-0113">Calvin cycle</keyword>
<keyword id="KW-0120">Carbon dioxide fixation</keyword>
<keyword id="KW-0150">Chloroplast</keyword>
<keyword id="KW-1015">Disulfide bond</keyword>
<keyword id="KW-0456">Lyase</keyword>
<keyword id="KW-0460">Magnesium</keyword>
<keyword id="KW-0479">Metal-binding</keyword>
<keyword id="KW-0488">Methylation</keyword>
<keyword id="KW-0503">Monooxygenase</keyword>
<keyword id="KW-0560">Oxidoreductase</keyword>
<keyword id="KW-0601">Photorespiration</keyword>
<keyword id="KW-0602">Photosynthesis</keyword>
<keyword id="KW-0934">Plastid</keyword>
<dbReference type="EC" id="4.1.1.39" evidence="1"/>
<dbReference type="EMBL" id="X69755">
    <property type="protein sequence ID" value="CAA49410.3"/>
    <property type="molecule type" value="Genomic_DNA"/>
</dbReference>
<dbReference type="PIR" id="S31539">
    <property type="entry name" value="S31539"/>
</dbReference>
<dbReference type="GO" id="GO:0009507">
    <property type="term" value="C:chloroplast"/>
    <property type="evidence" value="ECO:0007669"/>
    <property type="project" value="UniProtKB-SubCell"/>
</dbReference>
<dbReference type="GO" id="GO:0000287">
    <property type="term" value="F:magnesium ion binding"/>
    <property type="evidence" value="ECO:0007669"/>
    <property type="project" value="InterPro"/>
</dbReference>
<dbReference type="GO" id="GO:0004497">
    <property type="term" value="F:monooxygenase activity"/>
    <property type="evidence" value="ECO:0007669"/>
    <property type="project" value="UniProtKB-KW"/>
</dbReference>
<dbReference type="GO" id="GO:0016984">
    <property type="term" value="F:ribulose-bisphosphate carboxylase activity"/>
    <property type="evidence" value="ECO:0007669"/>
    <property type="project" value="UniProtKB-EC"/>
</dbReference>
<dbReference type="GO" id="GO:0009853">
    <property type="term" value="P:photorespiration"/>
    <property type="evidence" value="ECO:0007669"/>
    <property type="project" value="UniProtKB-KW"/>
</dbReference>
<dbReference type="GO" id="GO:0019253">
    <property type="term" value="P:reductive pentose-phosphate cycle"/>
    <property type="evidence" value="ECO:0007669"/>
    <property type="project" value="UniProtKB-KW"/>
</dbReference>
<dbReference type="Gene3D" id="3.20.20.110">
    <property type="entry name" value="Ribulose bisphosphate carboxylase, large subunit, C-terminal domain"/>
    <property type="match status" value="1"/>
</dbReference>
<dbReference type="Gene3D" id="3.30.70.150">
    <property type="entry name" value="RuBisCO large subunit, N-terminal domain"/>
    <property type="match status" value="1"/>
</dbReference>
<dbReference type="HAMAP" id="MF_01338">
    <property type="entry name" value="RuBisCO_L_type1"/>
    <property type="match status" value="1"/>
</dbReference>
<dbReference type="InterPro" id="IPR033966">
    <property type="entry name" value="RuBisCO"/>
</dbReference>
<dbReference type="InterPro" id="IPR020878">
    <property type="entry name" value="RuBisCo_large_chain_AS"/>
</dbReference>
<dbReference type="InterPro" id="IPR000685">
    <property type="entry name" value="RuBisCO_lsu_C"/>
</dbReference>
<dbReference type="InterPro" id="IPR036376">
    <property type="entry name" value="RuBisCO_lsu_C_sf"/>
</dbReference>
<dbReference type="InterPro" id="IPR017443">
    <property type="entry name" value="RuBisCO_lsu_fd_N"/>
</dbReference>
<dbReference type="InterPro" id="IPR036422">
    <property type="entry name" value="RuBisCO_lsu_N_sf"/>
</dbReference>
<dbReference type="InterPro" id="IPR020888">
    <property type="entry name" value="RuBisCO_lsuI"/>
</dbReference>
<dbReference type="NCBIfam" id="NF003252">
    <property type="entry name" value="PRK04208.1"/>
    <property type="match status" value="1"/>
</dbReference>
<dbReference type="PANTHER" id="PTHR42704">
    <property type="entry name" value="RIBULOSE BISPHOSPHATE CARBOXYLASE"/>
    <property type="match status" value="1"/>
</dbReference>
<dbReference type="PANTHER" id="PTHR42704:SF15">
    <property type="entry name" value="RIBULOSE BISPHOSPHATE CARBOXYLASE LARGE CHAIN"/>
    <property type="match status" value="1"/>
</dbReference>
<dbReference type="Pfam" id="PF00016">
    <property type="entry name" value="RuBisCO_large"/>
    <property type="match status" value="1"/>
</dbReference>
<dbReference type="Pfam" id="PF02788">
    <property type="entry name" value="RuBisCO_large_N"/>
    <property type="match status" value="1"/>
</dbReference>
<dbReference type="SFLD" id="SFLDS00014">
    <property type="entry name" value="RuBisCO"/>
    <property type="match status" value="1"/>
</dbReference>
<dbReference type="SFLD" id="SFLDG00301">
    <property type="entry name" value="RuBisCO-like_proteins"/>
    <property type="match status" value="1"/>
</dbReference>
<dbReference type="SUPFAM" id="SSF51649">
    <property type="entry name" value="RuBisCo, C-terminal domain"/>
    <property type="match status" value="1"/>
</dbReference>
<dbReference type="SUPFAM" id="SSF54966">
    <property type="entry name" value="RuBisCO, large subunit, small (N-terminal) domain"/>
    <property type="match status" value="1"/>
</dbReference>
<dbReference type="PROSITE" id="PS00157">
    <property type="entry name" value="RUBISCO_LARGE"/>
    <property type="match status" value="1"/>
</dbReference>
<evidence type="ECO:0000255" key="1">
    <source>
        <dbReference type="HAMAP-Rule" id="MF_01338"/>
    </source>
</evidence>
<reference key="1">
    <citation type="submission" date="1995-04" db="EMBL/GenBank/DDBJ databases">
        <authorList>
            <person name="Savolainen V."/>
        </authorList>
    </citation>
    <scope>NUCLEOTIDE SEQUENCE [GENOMIC DNA]</scope>
    <source>
        <strain>Sample SPE6</strain>
    </source>
</reference>
<reference key="2">
    <citation type="journal article" date="1994" name="Mol. Phylogenet. Evol.">
        <title>Molecular phylogeny of families related to Celastrales based on rbcL 5' flanking sequences.</title>
        <authorList>
            <person name="Savolainen V."/>
            <person name="Manen J.F."/>
            <person name="Douzery E.J.P."/>
            <person name="Spichiger R."/>
        </authorList>
    </citation>
    <scope>NUCLEOTIDE SEQUENCE [GENOMIC DNA] OF 1-49</scope>
    <source>
        <strain>Sample SPE6</strain>
    </source>
</reference>
<sequence>MSPQTETKASVGFKAGVKDYKLTYYTPDYETKDTDILAAFRVTPQPGVPPXXXXXXXXXESSTGTWTTVWTDGXTSLDRXXXXXXXXXXVPGEENQYIAYVAYPLDLFEEGSVTNMFTSIVGNVFGFKALRALRLEDLRIPPAYSKTFLGPPHGIQVERDKLNKYGRPLLGCTIKPKLGLSAKNYGRAVYECLRGGLDFTKDDENVNSQPFMRWRXXFLFCAEALYKAQAETGEIKGHYLNATAGTCEEMIKRAVFARELGVPIVMHDYLTGGFTANTSLAHYCRDNGLLLHIHRAMHAVIDRQKNHGXXFRVXXKALRMSGGDHIXXGTVVGKLEGDRESTLGFVDLLRDDYIEKDRSRGIFFTQDWVSMPGVIPVASGGIHVWHMPALTEIFGDDAVLQFGGGTLGHPWGNAPGAVANRVALEACVQARNEGRDLAVEGNEIIREASKWS</sequence>
<comment type="function">
    <text evidence="1">RuBisCO catalyzes two reactions: the carboxylation of D-ribulose 1,5-bisphosphate, the primary event in carbon dioxide fixation, as well as the oxidative fragmentation of the pentose substrate in the photorespiration process. Both reactions occur simultaneously and in competition at the same active site.</text>
</comment>
<comment type="catalytic activity">
    <reaction evidence="1">
        <text>2 (2R)-3-phosphoglycerate + 2 H(+) = D-ribulose 1,5-bisphosphate + CO2 + H2O</text>
        <dbReference type="Rhea" id="RHEA:23124"/>
        <dbReference type="ChEBI" id="CHEBI:15377"/>
        <dbReference type="ChEBI" id="CHEBI:15378"/>
        <dbReference type="ChEBI" id="CHEBI:16526"/>
        <dbReference type="ChEBI" id="CHEBI:57870"/>
        <dbReference type="ChEBI" id="CHEBI:58272"/>
        <dbReference type="EC" id="4.1.1.39"/>
    </reaction>
</comment>
<comment type="catalytic activity">
    <reaction evidence="1">
        <text>D-ribulose 1,5-bisphosphate + O2 = 2-phosphoglycolate + (2R)-3-phosphoglycerate + 2 H(+)</text>
        <dbReference type="Rhea" id="RHEA:36631"/>
        <dbReference type="ChEBI" id="CHEBI:15378"/>
        <dbReference type="ChEBI" id="CHEBI:15379"/>
        <dbReference type="ChEBI" id="CHEBI:57870"/>
        <dbReference type="ChEBI" id="CHEBI:58033"/>
        <dbReference type="ChEBI" id="CHEBI:58272"/>
    </reaction>
</comment>
<comment type="cofactor">
    <cofactor evidence="1">
        <name>Mg(2+)</name>
        <dbReference type="ChEBI" id="CHEBI:18420"/>
    </cofactor>
    <text evidence="1">Binds 1 Mg(2+) ion per subunit.</text>
</comment>
<comment type="subunit">
    <text evidence="1">Heterohexadecamer of 8 large chains and 8 small chains; disulfide-linked. The disulfide link is formed within the large subunit homodimers.</text>
</comment>
<comment type="subcellular location">
    <subcellularLocation>
        <location>Plastid</location>
        <location>Chloroplast</location>
    </subcellularLocation>
</comment>
<comment type="PTM">
    <text evidence="1">The disulfide bond which can form in the large chain dimeric partners within the hexadecamer appears to be associated with oxidative stress and protein turnover.</text>
</comment>
<comment type="miscellaneous">
    <text evidence="1">The basic functional RuBisCO is composed of a large chain homodimer in a 'head-to-tail' conformation. In form I RuBisCO this homodimer is arranged in a barrel-like tetramer with the small subunits forming a tetrameric 'cap' on each end of the 'barrel'.</text>
</comment>
<comment type="similarity">
    <text evidence="1">Belongs to the RuBisCO large chain family. Type I subfamily.</text>
</comment>